<organism evidence="12">
    <name type="scientific">Mus musculus</name>
    <name type="common">Mouse</name>
    <dbReference type="NCBI Taxonomy" id="10090"/>
    <lineage>
        <taxon>Eukaryota</taxon>
        <taxon>Metazoa</taxon>
        <taxon>Chordata</taxon>
        <taxon>Craniata</taxon>
        <taxon>Vertebrata</taxon>
        <taxon>Euteleostomi</taxon>
        <taxon>Mammalia</taxon>
        <taxon>Eutheria</taxon>
        <taxon>Euarchontoglires</taxon>
        <taxon>Glires</taxon>
        <taxon>Rodentia</taxon>
        <taxon>Myomorpha</taxon>
        <taxon>Muroidea</taxon>
        <taxon>Muridae</taxon>
        <taxon>Murinae</taxon>
        <taxon>Mus</taxon>
        <taxon>Mus</taxon>
    </lineage>
</organism>
<comment type="function">
    <text evidence="2">Calcium-independent phospholipase, lysophospholipase and O-acyltransferase involved in phospholipid remodeling. Preferentially hydrolyzes the ester bond of the fatty acyl group attached at sn-2 position of phospholipids with choline and ethanolamine head groups, producing lysophospholipids that are used in deacylation-reacylation cycles. Transfers the sn-1 fatty acyl from one lysophospholipid molecule to the sn-2 position of another lysophospholipid to form diacyl, alkylacyl and alkenylacyl glycerophospholipids. Cleaves ester bonds but not alkyl or alkenyl ether bonds at the sn-1 position of lysophospholipids. Catalyzes sn-2 fatty acyl transfer from phospholipids to the sn-2 position of 1-O-alkyl or 1-O-alkenyl lysophospholipids with lower efficiency.</text>
</comment>
<comment type="catalytic activity">
    <reaction evidence="2">
        <text>a 1,2-diacyl-sn-glycero-3-phosphocholine + H2O = a 1-acyl-sn-glycero-3-phosphocholine + a fatty acid + H(+)</text>
        <dbReference type="Rhea" id="RHEA:15801"/>
        <dbReference type="ChEBI" id="CHEBI:15377"/>
        <dbReference type="ChEBI" id="CHEBI:15378"/>
        <dbReference type="ChEBI" id="CHEBI:28868"/>
        <dbReference type="ChEBI" id="CHEBI:57643"/>
        <dbReference type="ChEBI" id="CHEBI:58168"/>
        <dbReference type="EC" id="3.1.1.4"/>
    </reaction>
    <physiologicalReaction direction="left-to-right" evidence="2">
        <dbReference type="Rhea" id="RHEA:15802"/>
    </physiologicalReaction>
</comment>
<comment type="catalytic activity">
    <reaction evidence="2">
        <text>a 1-O-alkyl-2-acyl-sn-glycero-3-phosphocholine + H2O = a 1-O-alkyl-sn-glycero-3-phosphocholine + a fatty acid + H(+)</text>
        <dbReference type="Rhea" id="RHEA:36231"/>
        <dbReference type="ChEBI" id="CHEBI:15377"/>
        <dbReference type="ChEBI" id="CHEBI:15378"/>
        <dbReference type="ChEBI" id="CHEBI:28868"/>
        <dbReference type="ChEBI" id="CHEBI:30909"/>
        <dbReference type="ChEBI" id="CHEBI:36702"/>
        <dbReference type="EC" id="3.1.1.4"/>
    </reaction>
    <physiologicalReaction direction="left-to-right" evidence="2">
        <dbReference type="Rhea" id="RHEA:36232"/>
    </physiologicalReaction>
</comment>
<comment type="catalytic activity">
    <reaction evidence="2">
        <text>1,2-dihexadecanoyl-sn-glycero-3-phosphocholine + H2O = 1-hexadecanoyl-sn-glycero-3-phosphocholine + hexadecanoate + H(+)</text>
        <dbReference type="Rhea" id="RHEA:41223"/>
        <dbReference type="ChEBI" id="CHEBI:7896"/>
        <dbReference type="ChEBI" id="CHEBI:15377"/>
        <dbReference type="ChEBI" id="CHEBI:15378"/>
        <dbReference type="ChEBI" id="CHEBI:72998"/>
        <dbReference type="ChEBI" id="CHEBI:72999"/>
    </reaction>
    <physiologicalReaction direction="left-to-right" evidence="2">
        <dbReference type="Rhea" id="RHEA:41224"/>
    </physiologicalReaction>
</comment>
<comment type="catalytic activity">
    <reaction evidence="2">
        <text>1-hexadecanoyl-2-(9Z-octadecenoyl)-sn-glycero-3-phosphocholine + H2O = 1-hexadecanoyl-sn-glycero-3-phosphocholine + (9Z)-octadecenoate + H(+)</text>
        <dbReference type="Rhea" id="RHEA:38779"/>
        <dbReference type="ChEBI" id="CHEBI:15377"/>
        <dbReference type="ChEBI" id="CHEBI:15378"/>
        <dbReference type="ChEBI" id="CHEBI:30823"/>
        <dbReference type="ChEBI" id="CHEBI:72998"/>
        <dbReference type="ChEBI" id="CHEBI:73001"/>
    </reaction>
    <physiologicalReaction direction="left-to-right" evidence="2">
        <dbReference type="Rhea" id="RHEA:38780"/>
    </physiologicalReaction>
</comment>
<comment type="catalytic activity">
    <reaction evidence="2">
        <text>1-hexadecanoyl-2-(9Z,12Z-octadecadienoyl)-sn-glycero-3-phosphocholine + H2O = (9Z,12Z)-octadecadienoate + 1-hexadecanoyl-sn-glycero-3-phosphocholine + H(+)</text>
        <dbReference type="Rhea" id="RHEA:40811"/>
        <dbReference type="ChEBI" id="CHEBI:15377"/>
        <dbReference type="ChEBI" id="CHEBI:15378"/>
        <dbReference type="ChEBI" id="CHEBI:30245"/>
        <dbReference type="ChEBI" id="CHEBI:72998"/>
        <dbReference type="ChEBI" id="CHEBI:73002"/>
    </reaction>
    <physiologicalReaction direction="left-to-right" evidence="2">
        <dbReference type="Rhea" id="RHEA:40812"/>
    </physiologicalReaction>
</comment>
<comment type="catalytic activity">
    <reaction evidence="2">
        <text>1-hexadecanoyl-2-(5Z,8Z,11Z,14Z-eicosatetraenoyl)-sn-glycero-3-phosphocholine + H2O = 1-hexadecanoyl-sn-glycero-3-phosphocholine + (5Z,8Z,11Z,14Z)-eicosatetraenoate + H(+)</text>
        <dbReference type="Rhea" id="RHEA:40427"/>
        <dbReference type="ChEBI" id="CHEBI:15377"/>
        <dbReference type="ChEBI" id="CHEBI:15378"/>
        <dbReference type="ChEBI" id="CHEBI:32395"/>
        <dbReference type="ChEBI" id="CHEBI:72998"/>
        <dbReference type="ChEBI" id="CHEBI:73003"/>
    </reaction>
    <physiologicalReaction direction="left-to-right" evidence="2">
        <dbReference type="Rhea" id="RHEA:40428"/>
    </physiologicalReaction>
</comment>
<comment type="catalytic activity">
    <reaction evidence="2">
        <text>1-O-hexadecyl-2-(5Z,8Z,11Z,14Z)-eicosatetraenoyl-sn-glycero-3-phosphocholine + H2O = 1-O-hexadecyl-sn-glycero-3-phosphocholine + (5Z,8Z,11Z,14Z)-eicosatetraenoate + H(+)</text>
        <dbReference type="Rhea" id="RHEA:41067"/>
        <dbReference type="ChEBI" id="CHEBI:15377"/>
        <dbReference type="ChEBI" id="CHEBI:15378"/>
        <dbReference type="ChEBI" id="CHEBI:32395"/>
        <dbReference type="ChEBI" id="CHEBI:55430"/>
        <dbReference type="ChEBI" id="CHEBI:64496"/>
    </reaction>
    <physiologicalReaction direction="left-to-right" evidence="2">
        <dbReference type="Rhea" id="RHEA:41068"/>
    </physiologicalReaction>
</comment>
<comment type="catalytic activity">
    <reaction evidence="2">
        <text>1-hexadecanoyl-2-(5Z,8Z,11Z,14Z-eicosatetraenoyl)-sn-glycero-3-phosphocholine + H2O = 2-(5Z,8Z,11Z,14Z)-eicosatetraenoyl-sn-glycero-3-phosphocholine + hexadecanoate + H(+)</text>
        <dbReference type="Rhea" id="RHEA:40571"/>
        <dbReference type="ChEBI" id="CHEBI:7896"/>
        <dbReference type="ChEBI" id="CHEBI:15377"/>
        <dbReference type="ChEBI" id="CHEBI:15378"/>
        <dbReference type="ChEBI" id="CHEBI:73003"/>
        <dbReference type="ChEBI" id="CHEBI:76079"/>
    </reaction>
    <physiologicalReaction direction="left-to-right" evidence="2">
        <dbReference type="Rhea" id="RHEA:40572"/>
    </physiologicalReaction>
</comment>
<comment type="catalytic activity">
    <reaction evidence="2">
        <text>a 1-acyl-sn-glycero-3-phosphocholine + H2O = sn-glycerol 3-phosphocholine + a fatty acid + H(+)</text>
        <dbReference type="Rhea" id="RHEA:15177"/>
        <dbReference type="ChEBI" id="CHEBI:15377"/>
        <dbReference type="ChEBI" id="CHEBI:15378"/>
        <dbReference type="ChEBI" id="CHEBI:16870"/>
        <dbReference type="ChEBI" id="CHEBI:28868"/>
        <dbReference type="ChEBI" id="CHEBI:58168"/>
        <dbReference type="EC" id="3.1.1.5"/>
    </reaction>
    <physiologicalReaction direction="left-to-right" evidence="2">
        <dbReference type="Rhea" id="RHEA:15178"/>
    </physiologicalReaction>
</comment>
<comment type="catalytic activity">
    <reaction evidence="2">
        <text>1-hexadecanoyl-sn-glycero-3-phosphocholine + H2O = sn-glycerol 3-phosphocholine + hexadecanoate + H(+)</text>
        <dbReference type="Rhea" id="RHEA:40435"/>
        <dbReference type="ChEBI" id="CHEBI:7896"/>
        <dbReference type="ChEBI" id="CHEBI:15377"/>
        <dbReference type="ChEBI" id="CHEBI:15378"/>
        <dbReference type="ChEBI" id="CHEBI:16870"/>
        <dbReference type="ChEBI" id="CHEBI:72998"/>
    </reaction>
    <physiologicalReaction direction="left-to-right" evidence="2">
        <dbReference type="Rhea" id="RHEA:40436"/>
    </physiologicalReaction>
</comment>
<comment type="catalytic activity">
    <reaction evidence="2">
        <text>2 1-hexadecanoyl-sn-glycero-3-phosphocholine = 1,2-dihexadecanoyl-sn-glycero-3-phosphocholine + sn-glycerol 3-phosphocholine</text>
        <dbReference type="Rhea" id="RHEA:40879"/>
        <dbReference type="ChEBI" id="CHEBI:16870"/>
        <dbReference type="ChEBI" id="CHEBI:72998"/>
        <dbReference type="ChEBI" id="CHEBI:72999"/>
    </reaction>
    <physiologicalReaction direction="left-to-right" evidence="2">
        <dbReference type="Rhea" id="RHEA:40880"/>
    </physiologicalReaction>
</comment>
<comment type="catalytic activity">
    <reaction evidence="2">
        <text>1-hexadecanoyl-sn-glycero-3-phosphoethanolamine + 1-hexadecanoyl-sn-glycero-3-phosphocholine = 1,2-dihexadecanoyl-sn-glycero-3-phosphoethanolamine + sn-glycerol 3-phosphocholine</text>
        <dbReference type="Rhea" id="RHEA:40899"/>
        <dbReference type="ChEBI" id="CHEBI:16870"/>
        <dbReference type="ChEBI" id="CHEBI:72998"/>
        <dbReference type="ChEBI" id="CHEBI:73004"/>
        <dbReference type="ChEBI" id="CHEBI:73005"/>
    </reaction>
    <physiologicalReaction direction="left-to-right" evidence="2">
        <dbReference type="Rhea" id="RHEA:40900"/>
    </physiologicalReaction>
</comment>
<comment type="catalytic activity">
    <reaction evidence="2">
        <text>1-hexadecanoyl-sn-glycero-3-phosphoethanolamine + 1-hexadecanoyl-sn-glycero-3-phosphocholine = sn-glycero-3-phosphoethanolamine + 1,2-dihexadecanoyl-sn-glycero-3-phosphocholine</text>
        <dbReference type="Rhea" id="RHEA:63764"/>
        <dbReference type="ChEBI" id="CHEBI:72998"/>
        <dbReference type="ChEBI" id="CHEBI:72999"/>
        <dbReference type="ChEBI" id="CHEBI:73004"/>
        <dbReference type="ChEBI" id="CHEBI:143890"/>
    </reaction>
    <physiologicalReaction direction="left-to-right" evidence="2">
        <dbReference type="Rhea" id="RHEA:63765"/>
    </physiologicalReaction>
</comment>
<comment type="catalytic activity">
    <reaction evidence="2">
        <text>2 1-hexadecanoyl-sn-glycero-3-phosphoethanolamine = 1,2-dihexadecanoyl-sn-glycero-3-phosphoethanolamine + sn-glycero-3-phosphoethanolamine</text>
        <dbReference type="Rhea" id="RHEA:63768"/>
        <dbReference type="ChEBI" id="CHEBI:73004"/>
        <dbReference type="ChEBI" id="CHEBI:73005"/>
        <dbReference type="ChEBI" id="CHEBI:143890"/>
    </reaction>
    <physiologicalReaction direction="left-to-right" evidence="2">
        <dbReference type="Rhea" id="RHEA:63769"/>
    </physiologicalReaction>
</comment>
<comment type="catalytic activity">
    <reaction evidence="2">
        <text>1-O-hexadecyl-sn-glycero-3-phosphocholine + 1-hexadecanoyl-sn-glycero-3-phosphocholine = 1-O-hexadecyl-2-hexadecanoyl-sn-glycero-3-phosphocholine + sn-glycerol 3-phosphocholine</text>
        <dbReference type="Rhea" id="RHEA:63656"/>
        <dbReference type="ChEBI" id="CHEBI:16870"/>
        <dbReference type="ChEBI" id="CHEBI:64496"/>
        <dbReference type="ChEBI" id="CHEBI:72744"/>
        <dbReference type="ChEBI" id="CHEBI:72998"/>
    </reaction>
    <physiologicalReaction direction="left-to-right" evidence="2">
        <dbReference type="Rhea" id="RHEA:63657"/>
    </physiologicalReaction>
</comment>
<comment type="catalytic activity">
    <reaction evidence="2">
        <text>a 1-O-(1Z-alkenyl)-sn-glycero-3-phosphoethanolamine + 1-hexadecanoyl-sn-glycero-3-phosphocholine = 1-O-(1Z)-alkenyl-2-hexadecanoyl-sn-glycero-3-phosphoethanolamine + sn-glycerol 3-phosphocholine</text>
        <dbReference type="Rhea" id="RHEA:63772"/>
        <dbReference type="ChEBI" id="CHEBI:16870"/>
        <dbReference type="ChEBI" id="CHEBI:72998"/>
        <dbReference type="ChEBI" id="CHEBI:77288"/>
        <dbReference type="ChEBI" id="CHEBI:77303"/>
    </reaction>
    <physiologicalReaction direction="left-to-right" evidence="2">
        <dbReference type="Rhea" id="RHEA:63773"/>
    </physiologicalReaction>
</comment>
<comment type="catalytic activity">
    <reaction evidence="2">
        <text>1-O-hexadecyl-sn-glycero-3-phosphocholine + 1-hexadecanoyl-sn-glycero-3-phosphoethanolamine = 1-O-hexadecyl-2-hexadecanoyl-sn-glycero-3-phosphocholine + sn-glycero-3-phosphoethanolamine</text>
        <dbReference type="Rhea" id="RHEA:63760"/>
        <dbReference type="ChEBI" id="CHEBI:64496"/>
        <dbReference type="ChEBI" id="CHEBI:72744"/>
        <dbReference type="ChEBI" id="CHEBI:73004"/>
        <dbReference type="ChEBI" id="CHEBI:143890"/>
    </reaction>
    <physiologicalReaction direction="left-to-right" evidence="2">
        <dbReference type="Rhea" id="RHEA:63761"/>
    </physiologicalReaction>
</comment>
<comment type="catalytic activity">
    <reaction evidence="2">
        <text>1-octadecanoyl-2-(5Z,8Z,11Z,14Z)-eicosatetraenoyl-sn-glycero-3-phosphoethanolamine + 1-hexadecanoyl-sn-glycero-3-phosphocholine = 1-octadecanoyl-sn-glycero-3-phosphoethanolamine + 1-hexadecanoyl-2-(5Z,8Z,11Z,14Z-eicosatetraenoyl)-sn-glycero-3-phosphocholine</text>
        <dbReference type="Rhea" id="RHEA:63788"/>
        <dbReference type="ChEBI" id="CHEBI:72998"/>
        <dbReference type="ChEBI" id="CHEBI:73003"/>
        <dbReference type="ChEBI" id="CHEBI:75036"/>
        <dbReference type="ChEBI" id="CHEBI:78268"/>
    </reaction>
    <physiologicalReaction direction="left-to-right" evidence="2">
        <dbReference type="Rhea" id="RHEA:63789"/>
    </physiologicalReaction>
</comment>
<comment type="catalytic activity">
    <reaction evidence="2">
        <text>1-octadecanoyl-2-(5Z,8Z,11Z,14Z)-eicosatetraenoyl-sn-glycero-3-phosphoethanolamine + 1-O-hexadecyl-sn-glycero-3-phosphocholine = 1-octadecanoyl-sn-glycero-3-phosphoethanolamine + 1-O-hexadecyl-2-(5Z,8Z,11Z,14Z)-eicosatetraenoyl-sn-glycero-3-phosphocholine</text>
        <dbReference type="Rhea" id="RHEA:63776"/>
        <dbReference type="ChEBI" id="CHEBI:55430"/>
        <dbReference type="ChEBI" id="CHEBI:64496"/>
        <dbReference type="ChEBI" id="CHEBI:75036"/>
        <dbReference type="ChEBI" id="CHEBI:78268"/>
    </reaction>
    <physiologicalReaction direction="left-to-right" evidence="2">
        <dbReference type="Rhea" id="RHEA:63777"/>
    </physiologicalReaction>
</comment>
<comment type="catalytic activity">
    <reaction evidence="2">
        <text>1-hexadecanoyl-2-(9Z,12Z-octadecadienoyl)-sn-glycero-3-phosphocholine + a 1-O-(1Z-alkenyl)-sn-glycero-3-phosphoethanolamine = 1-O-(1Z-alkenyl)-2-(9Z,12Z-octadecadienoyl)-sn-glycero-3-phosphoethanolamine + 1-hexadecanoyl-sn-glycero-3-phosphocholine</text>
        <dbReference type="Rhea" id="RHEA:63784"/>
        <dbReference type="ChEBI" id="CHEBI:72998"/>
        <dbReference type="ChEBI" id="CHEBI:73002"/>
        <dbReference type="ChEBI" id="CHEBI:77288"/>
        <dbReference type="ChEBI" id="CHEBI:149549"/>
    </reaction>
    <physiologicalReaction direction="left-to-right" evidence="2">
        <dbReference type="Rhea" id="RHEA:63785"/>
    </physiologicalReaction>
</comment>
<comment type="catalytic activity">
    <reaction evidence="2">
        <text>1-hexadecanoyl-2-(5Z,8Z,11Z,14Z-eicosatetraenoyl)-sn-glycero-3-phosphocholine + a 1-O-(1Z-alkenyl)-sn-glycero-3-phosphoethanolamine = 1-O-(1Z)-alkenyl-2-(5Z,8Z,11Z,14Z)-eicosatetraenoyl-sn-glycero-3-phosphoethanolamine + 1-hexadecanoyl-sn-glycero-3-phosphocholine</text>
        <dbReference type="Rhea" id="RHEA:63780"/>
        <dbReference type="ChEBI" id="CHEBI:72998"/>
        <dbReference type="ChEBI" id="CHEBI:73003"/>
        <dbReference type="ChEBI" id="CHEBI:77288"/>
        <dbReference type="ChEBI" id="CHEBI:77295"/>
    </reaction>
    <physiologicalReaction direction="left-to-right" evidence="2">
        <dbReference type="Rhea" id="RHEA:63781"/>
    </physiologicalReaction>
</comment>
<comment type="subcellular location">
    <subcellularLocation>
        <location evidence="5">Nucleus</location>
        <location evidence="5">Nucleoplasm</location>
    </subcellularLocation>
    <subcellularLocation>
        <location evidence="5">Nucleus envelope</location>
    </subcellularLocation>
    <subcellularLocation>
        <location evidence="5">Cytoplasm</location>
        <location evidence="5">Cell cortex</location>
    </subcellularLocation>
    <subcellularLocation>
        <location evidence="5">Cytoplasm</location>
        <location evidence="5">Cytoskeleton</location>
        <location evidence="5">Spindle</location>
    </subcellularLocation>
    <text evidence="5">In germinal vesicle stage oocytes and early embryos, shows mainly uniform nuclear and cortical expression. During germinal vesicle breakdown, found in intensely stained foci which accumulate near the dissolving nuclear envelope. Also localizes to spindle poles at metaphase II.</text>
</comment>
<comment type="alternative products">
    <event type="alternative splicing"/>
    <isoform>
        <id>Q64GA5-1</id>
        <name>1</name>
        <sequence type="displayed"/>
    </isoform>
    <isoform>
        <id>Q64GA5-2</id>
        <name>2</name>
        <sequence type="described" ref="VSP_058982"/>
    </isoform>
</comment>
<comment type="tissue specificity">
    <text evidence="5">Highly expressed in ovary, where it localizes to oocytes in preantral and antral stage follicles (at protein level). Not detected in other tissues tested.</text>
</comment>
<comment type="developmental stage">
    <text evidence="5">Strongly expressed in oocytes at the germinal vesicle stage, and in zygotes (at protein level). Maternal expression persists in embryos at the 2-cell stage but then declines rapidly and is completely lost by the morula stage (at protein level).</text>
</comment>
<feature type="chain" id="PRO_0000440671" description="Cytosolic phospholipase A2 gamma">
    <location>
        <begin position="1"/>
        <end position="597"/>
    </location>
</feature>
<feature type="domain" description="PLA2c" evidence="3">
    <location>
        <begin position="1"/>
        <end position="597"/>
    </location>
</feature>
<feature type="region of interest" description="Disordered" evidence="4">
    <location>
        <begin position="576"/>
        <end position="597"/>
    </location>
</feature>
<feature type="compositionally biased region" description="Basic and acidic residues" evidence="4">
    <location>
        <begin position="587"/>
        <end position="597"/>
    </location>
</feature>
<feature type="active site" description="Nucleophile" evidence="1">
    <location>
        <position position="83"/>
    </location>
</feature>
<feature type="active site" description="Proton acceptor" evidence="1">
    <location>
        <position position="417"/>
    </location>
</feature>
<feature type="splice variant" id="VSP_058982" description="In isoform 2.">
    <original>MEL</original>
    <variation>MSCAESPKSLHKR</variation>
    <location>
        <begin position="1"/>
        <end position="3"/>
    </location>
</feature>
<reference evidence="8" key="1">
    <citation type="journal article" date="2005" name="Dev. Biol.">
        <title>Mouse cPLA2gamma, a novel oocyte and early embryo-abundant phospholipase A2 gamma-like protein, is targeted to the nuclear envelope during germinal vesicle breakdown.</title>
        <authorList>
            <person name="Vitale A."/>
            <person name="Perlin J."/>
            <person name="Leonelli L."/>
            <person name="Herr J."/>
            <person name="Wright P."/>
            <person name="Digilio L."/>
            <person name="Coonrod S."/>
        </authorList>
    </citation>
    <scope>NUCLEOTIDE SEQUENCE [MRNA] (ISOFORM 1)</scope>
    <scope>SUBCELLULAR LOCATION</scope>
    <scope>TISSUE SPECIFICITY</scope>
    <scope>DEVELOPMENTAL STAGE</scope>
    <scope>IDENTIFICATION BY MASS SPECTROMETRY</scope>
    <source>
        <tissue evidence="8">Oocyte</tissue>
    </source>
</reference>
<reference key="2">
    <citation type="journal article" date="2005" name="Science">
        <title>The transcriptional landscape of the mammalian genome.</title>
        <authorList>
            <person name="Carninci P."/>
            <person name="Kasukawa T."/>
            <person name="Katayama S."/>
            <person name="Gough J."/>
            <person name="Frith M.C."/>
            <person name="Maeda N."/>
            <person name="Oyama R."/>
            <person name="Ravasi T."/>
            <person name="Lenhard B."/>
            <person name="Wells C."/>
            <person name="Kodzius R."/>
            <person name="Shimokawa K."/>
            <person name="Bajic V.B."/>
            <person name="Brenner S.E."/>
            <person name="Batalov S."/>
            <person name="Forrest A.R."/>
            <person name="Zavolan M."/>
            <person name="Davis M.J."/>
            <person name="Wilming L.G."/>
            <person name="Aidinis V."/>
            <person name="Allen J.E."/>
            <person name="Ambesi-Impiombato A."/>
            <person name="Apweiler R."/>
            <person name="Aturaliya R.N."/>
            <person name="Bailey T.L."/>
            <person name="Bansal M."/>
            <person name="Baxter L."/>
            <person name="Beisel K.W."/>
            <person name="Bersano T."/>
            <person name="Bono H."/>
            <person name="Chalk A.M."/>
            <person name="Chiu K.P."/>
            <person name="Choudhary V."/>
            <person name="Christoffels A."/>
            <person name="Clutterbuck D.R."/>
            <person name="Crowe M.L."/>
            <person name="Dalla E."/>
            <person name="Dalrymple B.P."/>
            <person name="de Bono B."/>
            <person name="Della Gatta G."/>
            <person name="di Bernardo D."/>
            <person name="Down T."/>
            <person name="Engstrom P."/>
            <person name="Fagiolini M."/>
            <person name="Faulkner G."/>
            <person name="Fletcher C.F."/>
            <person name="Fukushima T."/>
            <person name="Furuno M."/>
            <person name="Futaki S."/>
            <person name="Gariboldi M."/>
            <person name="Georgii-Hemming P."/>
            <person name="Gingeras T.R."/>
            <person name="Gojobori T."/>
            <person name="Green R.E."/>
            <person name="Gustincich S."/>
            <person name="Harbers M."/>
            <person name="Hayashi Y."/>
            <person name="Hensch T.K."/>
            <person name="Hirokawa N."/>
            <person name="Hill D."/>
            <person name="Huminiecki L."/>
            <person name="Iacono M."/>
            <person name="Ikeo K."/>
            <person name="Iwama A."/>
            <person name="Ishikawa T."/>
            <person name="Jakt M."/>
            <person name="Kanapin A."/>
            <person name="Katoh M."/>
            <person name="Kawasawa Y."/>
            <person name="Kelso J."/>
            <person name="Kitamura H."/>
            <person name="Kitano H."/>
            <person name="Kollias G."/>
            <person name="Krishnan S.P."/>
            <person name="Kruger A."/>
            <person name="Kummerfeld S.K."/>
            <person name="Kurochkin I.V."/>
            <person name="Lareau L.F."/>
            <person name="Lazarevic D."/>
            <person name="Lipovich L."/>
            <person name="Liu J."/>
            <person name="Liuni S."/>
            <person name="McWilliam S."/>
            <person name="Madan Babu M."/>
            <person name="Madera M."/>
            <person name="Marchionni L."/>
            <person name="Matsuda H."/>
            <person name="Matsuzawa S."/>
            <person name="Miki H."/>
            <person name="Mignone F."/>
            <person name="Miyake S."/>
            <person name="Morris K."/>
            <person name="Mottagui-Tabar S."/>
            <person name="Mulder N."/>
            <person name="Nakano N."/>
            <person name="Nakauchi H."/>
            <person name="Ng P."/>
            <person name="Nilsson R."/>
            <person name="Nishiguchi S."/>
            <person name="Nishikawa S."/>
            <person name="Nori F."/>
            <person name="Ohara O."/>
            <person name="Okazaki Y."/>
            <person name="Orlando V."/>
            <person name="Pang K.C."/>
            <person name="Pavan W.J."/>
            <person name="Pavesi G."/>
            <person name="Pesole G."/>
            <person name="Petrovsky N."/>
            <person name="Piazza S."/>
            <person name="Reed J."/>
            <person name="Reid J.F."/>
            <person name="Ring B.Z."/>
            <person name="Ringwald M."/>
            <person name="Rost B."/>
            <person name="Ruan Y."/>
            <person name="Salzberg S.L."/>
            <person name="Sandelin A."/>
            <person name="Schneider C."/>
            <person name="Schoenbach C."/>
            <person name="Sekiguchi K."/>
            <person name="Semple C.A."/>
            <person name="Seno S."/>
            <person name="Sessa L."/>
            <person name="Sheng Y."/>
            <person name="Shibata Y."/>
            <person name="Shimada H."/>
            <person name="Shimada K."/>
            <person name="Silva D."/>
            <person name="Sinclair B."/>
            <person name="Sperling S."/>
            <person name="Stupka E."/>
            <person name="Sugiura K."/>
            <person name="Sultana R."/>
            <person name="Takenaka Y."/>
            <person name="Taki K."/>
            <person name="Tammoja K."/>
            <person name="Tan S.L."/>
            <person name="Tang S."/>
            <person name="Taylor M.S."/>
            <person name="Tegner J."/>
            <person name="Teichmann S.A."/>
            <person name="Ueda H.R."/>
            <person name="van Nimwegen E."/>
            <person name="Verardo R."/>
            <person name="Wei C.L."/>
            <person name="Yagi K."/>
            <person name="Yamanishi H."/>
            <person name="Zabarovsky E."/>
            <person name="Zhu S."/>
            <person name="Zimmer A."/>
            <person name="Hide W."/>
            <person name="Bult C."/>
            <person name="Grimmond S.M."/>
            <person name="Teasdale R.D."/>
            <person name="Liu E.T."/>
            <person name="Brusic V."/>
            <person name="Quackenbush J."/>
            <person name="Wahlestedt C."/>
            <person name="Mattick J.S."/>
            <person name="Hume D.A."/>
            <person name="Kai C."/>
            <person name="Sasaki D."/>
            <person name="Tomaru Y."/>
            <person name="Fukuda S."/>
            <person name="Kanamori-Katayama M."/>
            <person name="Suzuki M."/>
            <person name="Aoki J."/>
            <person name="Arakawa T."/>
            <person name="Iida J."/>
            <person name="Imamura K."/>
            <person name="Itoh M."/>
            <person name="Kato T."/>
            <person name="Kawaji H."/>
            <person name="Kawagashira N."/>
            <person name="Kawashima T."/>
            <person name="Kojima M."/>
            <person name="Kondo S."/>
            <person name="Konno H."/>
            <person name="Nakano K."/>
            <person name="Ninomiya N."/>
            <person name="Nishio T."/>
            <person name="Okada M."/>
            <person name="Plessy C."/>
            <person name="Shibata K."/>
            <person name="Shiraki T."/>
            <person name="Suzuki S."/>
            <person name="Tagami M."/>
            <person name="Waki K."/>
            <person name="Watahiki A."/>
            <person name="Okamura-Oho Y."/>
            <person name="Suzuki H."/>
            <person name="Kawai J."/>
            <person name="Hayashizaki Y."/>
        </authorList>
    </citation>
    <scope>NUCLEOTIDE SEQUENCE [LARGE SCALE MRNA] (ISOFORM 1)</scope>
    <source>
        <strain evidence="9">C57BL/6J</strain>
        <tissue evidence="10">Embryo</tissue>
    </source>
</reference>
<reference evidence="12" key="3">
    <citation type="journal article" date="2009" name="PLoS Biol.">
        <title>Lineage-specific biology revealed by a finished genome assembly of the mouse.</title>
        <authorList>
            <person name="Church D.M."/>
            <person name="Goodstadt L."/>
            <person name="Hillier L.W."/>
            <person name="Zody M.C."/>
            <person name="Goldstein S."/>
            <person name="She X."/>
            <person name="Bult C.J."/>
            <person name="Agarwala R."/>
            <person name="Cherry J.L."/>
            <person name="DiCuccio M."/>
            <person name="Hlavina W."/>
            <person name="Kapustin Y."/>
            <person name="Meric P."/>
            <person name="Maglott D."/>
            <person name="Birtle Z."/>
            <person name="Marques A.C."/>
            <person name="Graves T."/>
            <person name="Zhou S."/>
            <person name="Teague B."/>
            <person name="Potamousis K."/>
            <person name="Churas C."/>
            <person name="Place M."/>
            <person name="Herschleb J."/>
            <person name="Runnheim R."/>
            <person name="Forrest D."/>
            <person name="Amos-Landgraf J."/>
            <person name="Schwartz D.C."/>
            <person name="Cheng Z."/>
            <person name="Lindblad-Toh K."/>
            <person name="Eichler E.E."/>
            <person name="Ponting C.P."/>
        </authorList>
    </citation>
    <scope>NUCLEOTIDE SEQUENCE [LARGE SCALE GENOMIC DNA]</scope>
    <source>
        <strain evidence="12">C57BL/6J</strain>
    </source>
</reference>
<reference key="4">
    <citation type="journal article" date="2004" name="Genome Res.">
        <title>The status, quality, and expansion of the NIH full-length cDNA project: the Mammalian Gene Collection (MGC).</title>
        <authorList>
            <consortium name="The MGC Project Team"/>
        </authorList>
    </citation>
    <scope>NUCLEOTIDE SEQUENCE [LARGE SCALE MRNA] (ISOFORMS 1 AND 2)</scope>
    <source>
        <tissue evidence="7">Brain</tissue>
    </source>
</reference>
<reference key="5">
    <citation type="journal article" date="2010" name="Cell">
        <title>A tissue-specific atlas of mouse protein phosphorylation and expression.</title>
        <authorList>
            <person name="Huttlin E.L."/>
            <person name="Jedrychowski M.P."/>
            <person name="Elias J.E."/>
            <person name="Goswami T."/>
            <person name="Rad R."/>
            <person name="Beausoleil S.A."/>
            <person name="Villen J."/>
            <person name="Haas W."/>
            <person name="Sowa M.E."/>
            <person name="Gygi S.P."/>
        </authorList>
    </citation>
    <scope>IDENTIFICATION BY MASS SPECTROMETRY [LARGE SCALE ANALYSIS]</scope>
    <source>
        <tissue>Spleen</tissue>
    </source>
</reference>
<name>PA24C_MOUSE</name>
<dbReference type="EC" id="3.1.1.4" evidence="3"/>
<dbReference type="EC" id="3.1.1.5" evidence="2"/>
<dbReference type="EC" id="2.3.1.-" evidence="2"/>
<dbReference type="EMBL" id="AY694793">
    <property type="protein sequence ID" value="AAU14177.1"/>
    <property type="molecule type" value="mRNA"/>
</dbReference>
<dbReference type="EMBL" id="AK136098">
    <property type="protein sequence ID" value="BAE22819.1"/>
    <property type="molecule type" value="mRNA"/>
</dbReference>
<dbReference type="EMBL" id="AK136143">
    <property type="protein sequence ID" value="BAE22843.1"/>
    <property type="molecule type" value="mRNA"/>
</dbReference>
<dbReference type="EMBL" id="AK145339">
    <property type="protein sequence ID" value="BAE26375.1"/>
    <property type="molecule type" value="mRNA"/>
</dbReference>
<dbReference type="EMBL" id="AK162196">
    <property type="protein sequence ID" value="BAE36785.1"/>
    <property type="molecule type" value="mRNA"/>
</dbReference>
<dbReference type="EMBL" id="AC161792">
    <property type="status" value="NOT_ANNOTATED_CDS"/>
    <property type="molecule type" value="Genomic_DNA"/>
</dbReference>
<dbReference type="EMBL" id="BC054740">
    <property type="protein sequence ID" value="AAH54740.1"/>
    <property type="molecule type" value="mRNA"/>
</dbReference>
<dbReference type="EMBL" id="BC117808">
    <property type="protein sequence ID" value="AAI17809.1"/>
    <property type="molecule type" value="mRNA"/>
</dbReference>
<dbReference type="EMBL" id="BC117809">
    <property type="protein sequence ID" value="AAI17810.1"/>
    <property type="molecule type" value="mRNA"/>
</dbReference>
<dbReference type="EMBL" id="BC129974">
    <property type="protein sequence ID" value="AAI29975.1"/>
    <property type="molecule type" value="mRNA"/>
</dbReference>
<dbReference type="EMBL" id="BC138548">
    <property type="protein sequence ID" value="AAI38549.1"/>
    <property type="molecule type" value="mRNA"/>
</dbReference>
<dbReference type="EMBL" id="BC145767">
    <property type="protein sequence ID" value="AAI45768.1"/>
    <property type="molecule type" value="mRNA"/>
</dbReference>
<dbReference type="CCDS" id="CCDS39771.1">
    <molecule id="Q64GA5-1"/>
</dbReference>
<dbReference type="CCDS" id="CCDS52027.1">
    <molecule id="Q64GA5-2"/>
</dbReference>
<dbReference type="RefSeq" id="NP_001004762.1">
    <molecule id="Q64GA5-1"/>
    <property type="nucleotide sequence ID" value="NM_001004762.3"/>
</dbReference>
<dbReference type="RefSeq" id="NP_001161976.1">
    <molecule id="Q64GA5-2"/>
    <property type="nucleotide sequence ID" value="NM_001168504.1"/>
</dbReference>
<dbReference type="RefSeq" id="XP_011248813.1">
    <property type="nucleotide sequence ID" value="XM_011250511.2"/>
</dbReference>
<dbReference type="RefSeq" id="XP_017177638.1">
    <property type="nucleotide sequence ID" value="XM_017322149.1"/>
</dbReference>
<dbReference type="SMR" id="Q64GA5"/>
<dbReference type="FunCoup" id="Q64GA5">
    <property type="interactions" value="760"/>
</dbReference>
<dbReference type="STRING" id="10090.ENSMUSP00000104168"/>
<dbReference type="iPTMnet" id="Q64GA5"/>
<dbReference type="PhosphoSitePlus" id="Q64GA5"/>
<dbReference type="REPRODUCTION-2DPAGE" id="Q64GA5"/>
<dbReference type="jPOST" id="Q64GA5"/>
<dbReference type="PaxDb" id="10090-ENSMUSP00000043672"/>
<dbReference type="ProteomicsDB" id="294316">
    <molecule id="Q64GA5-1"/>
</dbReference>
<dbReference type="ProteomicsDB" id="294317">
    <molecule id="Q64GA5-2"/>
</dbReference>
<dbReference type="Antibodypedia" id="31649">
    <property type="antibodies" value="116 antibodies from 27 providers"/>
</dbReference>
<dbReference type="DNASU" id="232889"/>
<dbReference type="Ensembl" id="ENSMUST00000043612.10">
    <molecule id="Q64GA5-1"/>
    <property type="protein sequence ID" value="ENSMUSP00000043672.10"/>
    <property type="gene ID" value="ENSMUSG00000033847.16"/>
</dbReference>
<dbReference type="Ensembl" id="ENSMUST00000108528.9">
    <molecule id="Q64GA5-2"/>
    <property type="protein sequence ID" value="ENSMUSP00000104168.3"/>
    <property type="gene ID" value="ENSMUSG00000033847.16"/>
</dbReference>
<dbReference type="Ensembl" id="ENSMUST00000167232.8">
    <molecule id="Q64GA5-2"/>
    <property type="protein sequence ID" value="ENSMUSP00000127060.2"/>
    <property type="gene ID" value="ENSMUSG00000033847.16"/>
</dbReference>
<dbReference type="GeneID" id="232889"/>
<dbReference type="KEGG" id="mmu:232889"/>
<dbReference type="UCSC" id="uc009ffs.2">
    <property type="organism name" value="mouse"/>
</dbReference>
<dbReference type="UCSC" id="uc009fft.2">
    <molecule id="Q64GA5-1"/>
    <property type="organism name" value="mouse"/>
</dbReference>
<dbReference type="AGR" id="MGI:1196403"/>
<dbReference type="CTD" id="8605"/>
<dbReference type="MGI" id="MGI:1196403">
    <property type="gene designation" value="Pla2g4c"/>
</dbReference>
<dbReference type="VEuPathDB" id="HostDB:ENSMUSG00000033847"/>
<dbReference type="eggNOG" id="KOG1325">
    <property type="taxonomic scope" value="Eukaryota"/>
</dbReference>
<dbReference type="GeneTree" id="ENSGT01030000234606"/>
<dbReference type="HOGENOM" id="CLU_011663_2_0_1"/>
<dbReference type="InParanoid" id="Q64GA5"/>
<dbReference type="OMA" id="LYYPKRY"/>
<dbReference type="OrthoDB" id="270970at2759"/>
<dbReference type="TreeFam" id="TF325228"/>
<dbReference type="Reactome" id="R-MMU-1482788">
    <property type="pathway name" value="Acyl chain remodelling of PC"/>
</dbReference>
<dbReference type="Reactome" id="R-MMU-1482839">
    <property type="pathway name" value="Acyl chain remodelling of PE"/>
</dbReference>
<dbReference type="Reactome" id="R-MMU-1482922">
    <property type="pathway name" value="Acyl chain remodelling of PI"/>
</dbReference>
<dbReference type="Reactome" id="R-MMU-1483115">
    <property type="pathway name" value="Hydrolysis of LPC"/>
</dbReference>
<dbReference type="Reactome" id="R-MMU-1483152">
    <property type="pathway name" value="Hydrolysis of LPE"/>
</dbReference>
<dbReference type="BioGRID-ORCS" id="232889">
    <property type="hits" value="2 hits in 79 CRISPR screens"/>
</dbReference>
<dbReference type="ChiTaRS" id="Pla2g4c">
    <property type="organism name" value="mouse"/>
</dbReference>
<dbReference type="PRO" id="PR:Q64GA5"/>
<dbReference type="Proteomes" id="UP000000589">
    <property type="component" value="Chromosome 7"/>
</dbReference>
<dbReference type="RNAct" id="Q64GA5">
    <property type="molecule type" value="protein"/>
</dbReference>
<dbReference type="Bgee" id="ENSMUSG00000033847">
    <property type="expression patterns" value="Expressed in animal zygote and 123 other cell types or tissues"/>
</dbReference>
<dbReference type="GO" id="GO:0005938">
    <property type="term" value="C:cell cortex"/>
    <property type="evidence" value="ECO:0000314"/>
    <property type="project" value="MGI"/>
</dbReference>
<dbReference type="GO" id="GO:0005789">
    <property type="term" value="C:endoplasmic reticulum membrane"/>
    <property type="evidence" value="ECO:0000250"/>
    <property type="project" value="UniProtKB"/>
</dbReference>
<dbReference type="GO" id="GO:0005811">
    <property type="term" value="C:lipid droplet"/>
    <property type="evidence" value="ECO:0000250"/>
    <property type="project" value="UniProtKB"/>
</dbReference>
<dbReference type="GO" id="GO:0031966">
    <property type="term" value="C:mitochondrial membrane"/>
    <property type="evidence" value="ECO:0000250"/>
    <property type="project" value="UniProtKB"/>
</dbReference>
<dbReference type="GO" id="GO:0005635">
    <property type="term" value="C:nuclear envelope"/>
    <property type="evidence" value="ECO:0000314"/>
    <property type="project" value="MGI"/>
</dbReference>
<dbReference type="GO" id="GO:0005654">
    <property type="term" value="C:nucleoplasm"/>
    <property type="evidence" value="ECO:0000314"/>
    <property type="project" value="MGI"/>
</dbReference>
<dbReference type="GO" id="GO:0005819">
    <property type="term" value="C:spindle"/>
    <property type="evidence" value="ECO:0007669"/>
    <property type="project" value="UniProtKB-SubCell"/>
</dbReference>
<dbReference type="GO" id="GO:0047499">
    <property type="term" value="F:calcium-independent phospholipase A2 activity"/>
    <property type="evidence" value="ECO:0007669"/>
    <property type="project" value="Ensembl"/>
</dbReference>
<dbReference type="GO" id="GO:0004622">
    <property type="term" value="F:lysophospholipase activity"/>
    <property type="evidence" value="ECO:0000250"/>
    <property type="project" value="UniProtKB"/>
</dbReference>
<dbReference type="GO" id="GO:0008374">
    <property type="term" value="F:O-acyltransferase activity"/>
    <property type="evidence" value="ECO:0007669"/>
    <property type="project" value="Ensembl"/>
</dbReference>
<dbReference type="GO" id="GO:0046475">
    <property type="term" value="P:glycerophospholipid catabolic process"/>
    <property type="evidence" value="ECO:0007669"/>
    <property type="project" value="Ensembl"/>
</dbReference>
<dbReference type="GO" id="GO:0140042">
    <property type="term" value="P:lipid droplet formation"/>
    <property type="evidence" value="ECO:0000250"/>
    <property type="project" value="UniProtKB"/>
</dbReference>
<dbReference type="GO" id="GO:0036151">
    <property type="term" value="P:phosphatidylcholine acyl-chain remodeling"/>
    <property type="evidence" value="ECO:0000250"/>
    <property type="project" value="UniProtKB"/>
</dbReference>
<dbReference type="GO" id="GO:0036152">
    <property type="term" value="P:phosphatidylethanolamine acyl-chain remodeling"/>
    <property type="evidence" value="ECO:0000250"/>
    <property type="project" value="UniProtKB"/>
</dbReference>
<dbReference type="GO" id="GO:0006663">
    <property type="term" value="P:platelet activating factor biosynthetic process"/>
    <property type="evidence" value="ECO:0000250"/>
    <property type="project" value="UniProtKB"/>
</dbReference>
<dbReference type="CDD" id="cd07202">
    <property type="entry name" value="cPLA2_Grp-IVC"/>
    <property type="match status" value="1"/>
</dbReference>
<dbReference type="FunFam" id="3.40.1090.10:FF:000077">
    <property type="entry name" value="Cytosolic phospholipase A2 gamma"/>
    <property type="match status" value="1"/>
</dbReference>
<dbReference type="FunFam" id="3.40.1090.10:FF:000079">
    <property type="entry name" value="Cytosolic phospholipase A2 gamma"/>
    <property type="match status" value="1"/>
</dbReference>
<dbReference type="Gene3D" id="3.40.1090.10">
    <property type="entry name" value="Cytosolic phospholipase A2 catalytic domain"/>
    <property type="match status" value="2"/>
</dbReference>
<dbReference type="InterPro" id="IPR016035">
    <property type="entry name" value="Acyl_Trfase/lysoPLipase"/>
</dbReference>
<dbReference type="InterPro" id="IPR002642">
    <property type="entry name" value="LysoPLipase_cat_dom"/>
</dbReference>
<dbReference type="PANTHER" id="PTHR10728">
    <property type="entry name" value="CYTOSOLIC PHOSPHOLIPASE A2"/>
    <property type="match status" value="1"/>
</dbReference>
<dbReference type="PANTHER" id="PTHR10728:SF39">
    <property type="entry name" value="CYTOSOLIC PHOSPHOLIPASE A2 GAMMA"/>
    <property type="match status" value="1"/>
</dbReference>
<dbReference type="Pfam" id="PF01735">
    <property type="entry name" value="PLA2_B"/>
    <property type="match status" value="1"/>
</dbReference>
<dbReference type="SMART" id="SM00022">
    <property type="entry name" value="PLAc"/>
    <property type="match status" value="1"/>
</dbReference>
<dbReference type="SUPFAM" id="SSF52151">
    <property type="entry name" value="FabD/lysophospholipase-like"/>
    <property type="match status" value="1"/>
</dbReference>
<dbReference type="PROSITE" id="PS51210">
    <property type="entry name" value="PLA2C"/>
    <property type="match status" value="1"/>
</dbReference>
<protein>
    <recommendedName>
        <fullName evidence="6">Cytosolic phospholipase A2 gamma</fullName>
        <shortName evidence="6">cPLA2-gamma</shortName>
        <ecNumber evidence="3">3.1.1.4</ecNumber>
    </recommendedName>
    <alternativeName>
        <fullName>Cytosolic lysophospholipase</fullName>
        <ecNumber evidence="2">3.1.1.5</ecNumber>
    </alternativeName>
    <alternativeName>
        <fullName>Cytosolic lysophospholipid O-acyltransferase</fullName>
        <ecNumber evidence="2">2.3.1.-</ecNumber>
    </alternativeName>
    <alternativeName>
        <fullName evidence="11">Phospholipase A2 group IVC</fullName>
    </alternativeName>
</protein>
<keyword id="KW-0025">Alternative splicing</keyword>
<keyword id="KW-0963">Cytoplasm</keyword>
<keyword id="KW-0206">Cytoskeleton</keyword>
<keyword id="KW-0378">Hydrolase</keyword>
<keyword id="KW-0443">Lipid metabolism</keyword>
<keyword id="KW-0539">Nucleus</keyword>
<keyword id="KW-1208">Phospholipid metabolism</keyword>
<keyword id="KW-1185">Reference proteome</keyword>
<keyword id="KW-0808">Transferase</keyword>
<sequence length="597" mass="67882">MELSSGVCPATRLQEAEKAAVHKRSPKVLEALRKLNIQADQAPVIAVLGSGGGLRAHIACLGVLSELKELGLLDAVTYLAGVSGSTWALSSLYTKNGNMEGIEEELKHRYEKNEWDFHESLEKAIQASKRENYSLTDFWAYLIVSRQIRELQDSNLSSLKKQVEEGVLPYPIFAAIDEDLLADWRERKTQNSWFEFTPHHAGYPALGAYVPITEFGSRFENGKLVKSEPERDLTFLRGLWGSAFADIKEIKNYILNYFRNPFGKLKFIEGPVTYSEAPRMNVDAMLLDLVMAYFTDMNDPSIKDKLCALQQALGTETDEFGIEMAEIIQNWNETSAEKKEQFLDHLLDRFKKTQEDTTTYSLMNWNTGLVWDRCVFVNETRKCVSKWQWGTVYNFLYKHGKIADETMCSRELLHLVDAGFAINTPYPLVLPPVRETHLILSFDFSAGDPLETIRATADYCQRHEIPFPEVSEDQLKEWAKAPASCYVLRGETGPVVMHFTLFNKDNCGDDIETWRKKYGTVKLSDSYTPDLVRDLLRVSKENVKKNKINILSEMRKVAGNPGNIPRVNKEACLGDRVKDPQGSQTVEFKKSHNISKD</sequence>
<accession>Q64GA5</accession>
<accession>Q08EC7</accession>
<accession>Q3UWS1</accession>
<accession>Q7TN01</accession>
<evidence type="ECO:0000250" key="1">
    <source>
        <dbReference type="UniProtKB" id="P47712"/>
    </source>
</evidence>
<evidence type="ECO:0000250" key="2">
    <source>
        <dbReference type="UniProtKB" id="Q9UP65"/>
    </source>
</evidence>
<evidence type="ECO:0000255" key="3">
    <source>
        <dbReference type="PROSITE-ProRule" id="PRU00555"/>
    </source>
</evidence>
<evidence type="ECO:0000256" key="4">
    <source>
        <dbReference type="SAM" id="MobiDB-lite"/>
    </source>
</evidence>
<evidence type="ECO:0000269" key="5">
    <source>
    </source>
</evidence>
<evidence type="ECO:0000303" key="6">
    <source>
    </source>
</evidence>
<evidence type="ECO:0000312" key="7">
    <source>
        <dbReference type="EMBL" id="AAI38549.1"/>
    </source>
</evidence>
<evidence type="ECO:0000312" key="8">
    <source>
        <dbReference type="EMBL" id="AAU14177.1"/>
    </source>
</evidence>
<evidence type="ECO:0000312" key="9">
    <source>
        <dbReference type="EMBL" id="BAE22819.1"/>
    </source>
</evidence>
<evidence type="ECO:0000312" key="10">
    <source>
        <dbReference type="EMBL" id="BAE26375.1"/>
    </source>
</evidence>
<evidence type="ECO:0000312" key="11">
    <source>
        <dbReference type="MGI" id="MGI:1196403"/>
    </source>
</evidence>
<evidence type="ECO:0000312" key="12">
    <source>
        <dbReference type="Proteomes" id="UP000000589"/>
    </source>
</evidence>
<proteinExistence type="evidence at protein level"/>
<gene>
    <name evidence="11" type="primary">Pla2g4c</name>
</gene>